<proteinExistence type="inferred from homology"/>
<protein>
    <recommendedName>
        <fullName evidence="1">Adenine deaminase</fullName>
        <shortName evidence="1">Adenase</shortName>
        <shortName evidence="1">Adenine aminase</shortName>
        <ecNumber evidence="1">3.5.4.2</ecNumber>
    </recommendedName>
</protein>
<dbReference type="EC" id="3.5.4.2" evidence="1"/>
<dbReference type="EMBL" id="AL935263">
    <property type="protein sequence ID" value="CCC80327.1"/>
    <property type="molecule type" value="Genomic_DNA"/>
</dbReference>
<dbReference type="RefSeq" id="WP_011102113.1">
    <property type="nucleotide sequence ID" value="NC_004567.2"/>
</dbReference>
<dbReference type="RefSeq" id="YP_004890841.1">
    <property type="nucleotide sequence ID" value="NC_004567.2"/>
</dbReference>
<dbReference type="SMR" id="Q88SR1"/>
<dbReference type="STRING" id="220668.lp_3334"/>
<dbReference type="DNASU" id="1063932"/>
<dbReference type="EnsemblBacteria" id="CCC80327">
    <property type="protein sequence ID" value="CCC80327"/>
    <property type="gene ID" value="lp_3334"/>
</dbReference>
<dbReference type="KEGG" id="lpl:lp_3334"/>
<dbReference type="PATRIC" id="fig|220668.9.peg.2779"/>
<dbReference type="eggNOG" id="COG1001">
    <property type="taxonomic scope" value="Bacteria"/>
</dbReference>
<dbReference type="HOGENOM" id="CLU_027935_0_0_9"/>
<dbReference type="OrthoDB" id="9775607at2"/>
<dbReference type="PhylomeDB" id="Q88SR1"/>
<dbReference type="Proteomes" id="UP000000432">
    <property type="component" value="Chromosome"/>
</dbReference>
<dbReference type="GO" id="GO:0000034">
    <property type="term" value="F:adenine deaminase activity"/>
    <property type="evidence" value="ECO:0007669"/>
    <property type="project" value="UniProtKB-UniRule"/>
</dbReference>
<dbReference type="GO" id="GO:0006146">
    <property type="term" value="P:adenine catabolic process"/>
    <property type="evidence" value="ECO:0007669"/>
    <property type="project" value="InterPro"/>
</dbReference>
<dbReference type="CDD" id="cd01295">
    <property type="entry name" value="AdeC"/>
    <property type="match status" value="1"/>
</dbReference>
<dbReference type="Gene3D" id="3.20.20.140">
    <property type="entry name" value="Metal-dependent hydrolases"/>
    <property type="match status" value="1"/>
</dbReference>
<dbReference type="Gene3D" id="2.30.40.10">
    <property type="entry name" value="Urease, subunit C, domain 1"/>
    <property type="match status" value="1"/>
</dbReference>
<dbReference type="HAMAP" id="MF_01518">
    <property type="entry name" value="Adenine_deamin"/>
    <property type="match status" value="1"/>
</dbReference>
<dbReference type="InterPro" id="IPR006679">
    <property type="entry name" value="Adenine_deam"/>
</dbReference>
<dbReference type="InterPro" id="IPR026912">
    <property type="entry name" value="Adenine_deam_C"/>
</dbReference>
<dbReference type="InterPro" id="IPR006680">
    <property type="entry name" value="Amidohydro-rel"/>
</dbReference>
<dbReference type="InterPro" id="IPR011059">
    <property type="entry name" value="Metal-dep_hydrolase_composite"/>
</dbReference>
<dbReference type="InterPro" id="IPR032466">
    <property type="entry name" value="Metal_Hydrolase"/>
</dbReference>
<dbReference type="NCBIfam" id="TIGR01178">
    <property type="entry name" value="ade"/>
    <property type="match status" value="1"/>
</dbReference>
<dbReference type="PANTHER" id="PTHR11113:SF2">
    <property type="entry name" value="ADENINE DEAMINASE"/>
    <property type="match status" value="1"/>
</dbReference>
<dbReference type="PANTHER" id="PTHR11113">
    <property type="entry name" value="N-ACETYLGLUCOSAMINE-6-PHOSPHATE DEACETYLASE"/>
    <property type="match status" value="1"/>
</dbReference>
<dbReference type="Pfam" id="PF13382">
    <property type="entry name" value="Adenine_deam_C"/>
    <property type="match status" value="1"/>
</dbReference>
<dbReference type="Pfam" id="PF01979">
    <property type="entry name" value="Amidohydro_1"/>
    <property type="match status" value="1"/>
</dbReference>
<dbReference type="SUPFAM" id="SSF51338">
    <property type="entry name" value="Composite domain of metallo-dependent hydrolases"/>
    <property type="match status" value="1"/>
</dbReference>
<dbReference type="SUPFAM" id="SSF51556">
    <property type="entry name" value="Metallo-dependent hydrolases"/>
    <property type="match status" value="1"/>
</dbReference>
<feature type="chain" id="PRO_0000142426" description="Adenine deaminase">
    <location>
        <begin position="1"/>
        <end position="563"/>
    </location>
</feature>
<sequence length="563" mass="60927">MTKTVEMVITGAQVLNVYTREFEATSLWIDHGRIISNLRDEPYIAAQHVDATGQWIVPGMIDAHVHMESSMVAPSELGKVLLQHGVTTIATDPHELANVAGIAGIQYLIDDARQTPLDVCFMLPSSVPCVPFDDNGATLHAADLRPLYQQSEVRGLAEVMDYGAVARGDTDTLAKISDAYAYGYHADGHAAGLNAHQLNVMRNAGLDTDHECMTVAEAQDRVRAGMAVFLREGTVERDVLPTIGAVTEANASRFAFCTDDKMISDLLTEGSIDYNVRLAMQSGMRPELAYTLASLNGAMAHRLSDRGSLSAGQLADLVVLDDLEHVRIARTMKRGQWILPSTTKPLPFTATRVQHHAQLADFQLPLATGLANVIGVQPNHIETDHLTLPIDATQNFEADCQRDILKMVVIERHHNTGKVGVGLVHGFALKQGAIAGTVAHDAHNIVAVGTSDAAILRAVAQITQDNGGIAVVDNEQVLATMPLAIGGLLSAASYQKVAEQLAELKRAYEVISERPLSFDPFITLSFLTLPVIPTLKLTARGLFDYATFDFIPVAIQDNQRQTV</sequence>
<organism>
    <name type="scientific">Lactiplantibacillus plantarum (strain ATCC BAA-793 / NCIMB 8826 / WCFS1)</name>
    <name type="common">Lactobacillus plantarum</name>
    <dbReference type="NCBI Taxonomy" id="220668"/>
    <lineage>
        <taxon>Bacteria</taxon>
        <taxon>Bacillati</taxon>
        <taxon>Bacillota</taxon>
        <taxon>Bacilli</taxon>
        <taxon>Lactobacillales</taxon>
        <taxon>Lactobacillaceae</taxon>
        <taxon>Lactiplantibacillus</taxon>
    </lineage>
</organism>
<reference key="1">
    <citation type="journal article" date="2003" name="Proc. Natl. Acad. Sci. U.S.A.">
        <title>Complete genome sequence of Lactobacillus plantarum WCFS1.</title>
        <authorList>
            <person name="Kleerebezem M."/>
            <person name="Boekhorst J."/>
            <person name="van Kranenburg R."/>
            <person name="Molenaar D."/>
            <person name="Kuipers O.P."/>
            <person name="Leer R."/>
            <person name="Tarchini R."/>
            <person name="Peters S.A."/>
            <person name="Sandbrink H.M."/>
            <person name="Fiers M.W.E.J."/>
            <person name="Stiekema W."/>
            <person name="Klein Lankhorst R.M."/>
            <person name="Bron P.A."/>
            <person name="Hoffer S.M."/>
            <person name="Nierop Groot M.N."/>
            <person name="Kerkhoven R."/>
            <person name="De Vries M."/>
            <person name="Ursing B."/>
            <person name="De Vos W.M."/>
            <person name="Siezen R.J."/>
        </authorList>
    </citation>
    <scope>NUCLEOTIDE SEQUENCE [LARGE SCALE GENOMIC DNA]</scope>
    <source>
        <strain>ATCC BAA-793 / NCIMB 8826 / WCFS1</strain>
    </source>
</reference>
<reference key="2">
    <citation type="journal article" date="2012" name="J. Bacteriol.">
        <title>Complete resequencing and reannotation of the Lactobacillus plantarum WCFS1 genome.</title>
        <authorList>
            <person name="Siezen R.J."/>
            <person name="Francke C."/>
            <person name="Renckens B."/>
            <person name="Boekhorst J."/>
            <person name="Wels M."/>
            <person name="Kleerebezem M."/>
            <person name="van Hijum S.A."/>
        </authorList>
    </citation>
    <scope>NUCLEOTIDE SEQUENCE [LARGE SCALE GENOMIC DNA]</scope>
    <scope>GENOME REANNOTATION</scope>
    <source>
        <strain>ATCC BAA-793 / NCIMB 8826 / WCFS1</strain>
    </source>
</reference>
<evidence type="ECO:0000255" key="1">
    <source>
        <dbReference type="HAMAP-Rule" id="MF_01518"/>
    </source>
</evidence>
<gene>
    <name evidence="1" type="primary">ade</name>
    <name type="synonym">adeC</name>
    <name type="ordered locus">lp_3334</name>
</gene>
<accession>Q88SR1</accession>
<accession>F9UTK9</accession>
<name>ADEC_LACPL</name>
<keyword id="KW-0378">Hydrolase</keyword>
<keyword id="KW-0464">Manganese</keyword>
<keyword id="KW-1185">Reference proteome</keyword>
<comment type="catalytic activity">
    <reaction evidence="1">
        <text>adenine + H2O + H(+) = hypoxanthine + NH4(+)</text>
        <dbReference type="Rhea" id="RHEA:23688"/>
        <dbReference type="ChEBI" id="CHEBI:15377"/>
        <dbReference type="ChEBI" id="CHEBI:15378"/>
        <dbReference type="ChEBI" id="CHEBI:16708"/>
        <dbReference type="ChEBI" id="CHEBI:17368"/>
        <dbReference type="ChEBI" id="CHEBI:28938"/>
        <dbReference type="EC" id="3.5.4.2"/>
    </reaction>
</comment>
<comment type="cofactor">
    <cofactor evidence="1">
        <name>Mn(2+)</name>
        <dbReference type="ChEBI" id="CHEBI:29035"/>
    </cofactor>
</comment>
<comment type="similarity">
    <text evidence="1">Belongs to the metallo-dependent hydrolases superfamily. Adenine deaminase family.</text>
</comment>